<accession>F4JG10</accession>
<accession>Q8GYW5</accession>
<accession>Q9C5T7</accession>
<accession>Q9SYE3</accession>
<name>XYN3_ARATH</name>
<keyword id="KW-0119">Carbohydrate metabolism</keyword>
<keyword id="KW-0326">Glycosidase</keyword>
<keyword id="KW-0378">Hydrolase</keyword>
<keyword id="KW-0624">Polysaccharide degradation</keyword>
<keyword id="KW-1185">Reference proteome</keyword>
<keyword id="KW-0677">Repeat</keyword>
<keyword id="KW-0858">Xylan degradation</keyword>
<sequence length="752" mass="84552">MEKNTNTNHTSDDNNDKNHTNEEQEKIILNPNFEDGLNNWTGRACKIVLHESMDSGKIVPLSGKVFAAATQRKDTWNGIQQEISGRFRRKRVYEVTAVVRIFGNNVTSATVQATLWVLNANKREQYIVIANVQATDKNWVELKGKFVIHGSPSRVILYLEGPPPRADILLNSLVVQHAKRNRPSPPPFYENPGFGVNIVENSEVLDGGTKPWFTLGNCKLSVGQGAPRTLPPMARDTLGPHKPLGGNYIVVTNRTQTWMGPAQMITDKIKLFLTYQISAWVKLGVGVSGSSMSPQNVNIALSVDNQWVNGGQVEVTVGDTWHEIAGSFRLEKQPQNVMVYVQGPGAGIDLMIAALQIFPVDRRERVRCLKRQVDEVRKRDIVLKFSGLNDDESFDLFPYIVKVKQTYNSFPVGTCINRTDIDNEDFVDFFTKNFNWAVFGNELKWYATEAERGKVNYQDADDMLDLCIGNNINVRGHCIFWEVESTVQPWVRQLNKTDLMNAVQKRLTDLLTRYKGKFKHYDVNNEMLHGSFYQDRLGKGVRALMFNIAHKLDPSPLLFVNDYHVEDGDDPRSSPEKYIKLVLDLEAQGATVGGIGIQGHIDSPVGAIVCSALDMLSVLGRPIWFTELDVSSSNEYVRGEDLEVMLWEAFAHPSVEGIMLWGFWELSMSRENANLVEGEGEVNEAGKRFLEVKQEWLSHAYGIINDESEFTFRGYHGTYAVEICTPAGIVLKTFVVEKGDTPLVISIDLSSL</sequence>
<proteinExistence type="evidence at transcript level"/>
<gene>
    <name evidence="7" type="primary">XYN3</name>
    <name evidence="9" type="ordered locus">At4g08160</name>
    <name evidence="10" type="ORF">F9M13.1</name>
</gene>
<dbReference type="EC" id="3.2.1.8" evidence="3"/>
<dbReference type="EMBL" id="AC006267">
    <property type="protein sequence ID" value="AAD27896.1"/>
    <property type="status" value="ALT_SEQ"/>
    <property type="molecule type" value="Genomic_DNA"/>
</dbReference>
<dbReference type="EMBL" id="AL161510">
    <property type="protein sequence ID" value="CAB81152.1"/>
    <property type="status" value="ALT_SEQ"/>
    <property type="molecule type" value="Genomic_DNA"/>
</dbReference>
<dbReference type="EMBL" id="CP002687">
    <property type="protein sequence ID" value="AEE82599.1"/>
    <property type="molecule type" value="Genomic_DNA"/>
</dbReference>
<dbReference type="EMBL" id="AK117349">
    <property type="protein sequence ID" value="BAC42019.1"/>
    <property type="molecule type" value="mRNA"/>
</dbReference>
<dbReference type="EMBL" id="BT005962">
    <property type="protein sequence ID" value="AAO64897.1"/>
    <property type="molecule type" value="mRNA"/>
</dbReference>
<dbReference type="EMBL" id="AB057770">
    <property type="protein sequence ID" value="BAB39757.1"/>
    <property type="molecule type" value="mRNA"/>
</dbReference>
<dbReference type="PIR" id="E85080">
    <property type="entry name" value="E85080"/>
</dbReference>
<dbReference type="RefSeq" id="NP_192556.2">
    <property type="nucleotide sequence ID" value="NM_116885.4"/>
</dbReference>
<dbReference type="SMR" id="F4JG10"/>
<dbReference type="FunCoup" id="F4JG10">
    <property type="interactions" value="22"/>
</dbReference>
<dbReference type="STRING" id="3702.F4JG10"/>
<dbReference type="CAZy" id="CBM22">
    <property type="family name" value="Carbohydrate-Binding Module Family 22"/>
</dbReference>
<dbReference type="CAZy" id="GH10">
    <property type="family name" value="Glycoside Hydrolase Family 10"/>
</dbReference>
<dbReference type="iPTMnet" id="F4JG10"/>
<dbReference type="PaxDb" id="3702-AT4G08160.1"/>
<dbReference type="ProteomicsDB" id="242406"/>
<dbReference type="EnsemblPlants" id="AT4G08160.1">
    <property type="protein sequence ID" value="AT4G08160.1"/>
    <property type="gene ID" value="AT4G08160"/>
</dbReference>
<dbReference type="GeneID" id="826365"/>
<dbReference type="Gramene" id="AT4G08160.1">
    <property type="protein sequence ID" value="AT4G08160.1"/>
    <property type="gene ID" value="AT4G08160"/>
</dbReference>
<dbReference type="KEGG" id="ath:AT4G08160"/>
<dbReference type="Araport" id="AT4G08160"/>
<dbReference type="TAIR" id="AT4G08160"/>
<dbReference type="eggNOG" id="ENOG502QSCW">
    <property type="taxonomic scope" value="Eukaryota"/>
</dbReference>
<dbReference type="InParanoid" id="F4JG10"/>
<dbReference type="OMA" id="SCIGRSN"/>
<dbReference type="OrthoDB" id="3055998at2759"/>
<dbReference type="UniPathway" id="UPA00114"/>
<dbReference type="PRO" id="PR:F4JG10"/>
<dbReference type="Proteomes" id="UP000006548">
    <property type="component" value="Chromosome 4"/>
</dbReference>
<dbReference type="ExpressionAtlas" id="F4JG10">
    <property type="expression patterns" value="baseline and differential"/>
</dbReference>
<dbReference type="GO" id="GO:0031176">
    <property type="term" value="F:endo-1,4-beta-xylanase activity"/>
    <property type="evidence" value="ECO:0000250"/>
    <property type="project" value="TAIR"/>
</dbReference>
<dbReference type="GO" id="GO:0045493">
    <property type="term" value="P:xylan catabolic process"/>
    <property type="evidence" value="ECO:0007669"/>
    <property type="project" value="UniProtKB-UniPathway"/>
</dbReference>
<dbReference type="FunFam" id="3.20.20.80:FF:000104">
    <property type="entry name" value="Endo-1,4-beta-xylanase A"/>
    <property type="match status" value="1"/>
</dbReference>
<dbReference type="FunFam" id="2.60.120.260:FF:000103">
    <property type="entry name" value="Glycosyl hydrolase family 10 protein"/>
    <property type="match status" value="1"/>
</dbReference>
<dbReference type="FunFam" id="2.60.120.260:FF:000146">
    <property type="entry name" value="Glycosyl hydrolase family 10 protein"/>
    <property type="match status" value="1"/>
</dbReference>
<dbReference type="Gene3D" id="2.60.120.260">
    <property type="entry name" value="Galactose-binding domain-like"/>
    <property type="match status" value="2"/>
</dbReference>
<dbReference type="Gene3D" id="3.20.20.80">
    <property type="entry name" value="Glycosidases"/>
    <property type="match status" value="1"/>
</dbReference>
<dbReference type="InterPro" id="IPR003305">
    <property type="entry name" value="CenC_carb-bd"/>
</dbReference>
<dbReference type="InterPro" id="IPR008979">
    <property type="entry name" value="Galactose-bd-like_sf"/>
</dbReference>
<dbReference type="InterPro" id="IPR044846">
    <property type="entry name" value="GH10"/>
</dbReference>
<dbReference type="InterPro" id="IPR001000">
    <property type="entry name" value="GH10_dom"/>
</dbReference>
<dbReference type="InterPro" id="IPR017853">
    <property type="entry name" value="Glycoside_hydrolase_SF"/>
</dbReference>
<dbReference type="PANTHER" id="PTHR31490:SF60">
    <property type="entry name" value="ENDO-1,4-BETA-XYLANASE 3"/>
    <property type="match status" value="1"/>
</dbReference>
<dbReference type="PANTHER" id="PTHR31490">
    <property type="entry name" value="GLYCOSYL HYDROLASE"/>
    <property type="match status" value="1"/>
</dbReference>
<dbReference type="Pfam" id="PF02018">
    <property type="entry name" value="CBM_4_9"/>
    <property type="match status" value="2"/>
</dbReference>
<dbReference type="Pfam" id="PF00331">
    <property type="entry name" value="Glyco_hydro_10"/>
    <property type="match status" value="1"/>
</dbReference>
<dbReference type="SMART" id="SM00633">
    <property type="entry name" value="Glyco_10"/>
    <property type="match status" value="1"/>
</dbReference>
<dbReference type="SUPFAM" id="SSF51445">
    <property type="entry name" value="(Trans)glycosidases"/>
    <property type="match status" value="1"/>
</dbReference>
<dbReference type="SUPFAM" id="SSF49785">
    <property type="entry name" value="Galactose-binding domain-like"/>
    <property type="match status" value="2"/>
</dbReference>
<dbReference type="PROSITE" id="PS00591">
    <property type="entry name" value="GH10_1"/>
    <property type="match status" value="1"/>
</dbReference>
<dbReference type="PROSITE" id="PS51760">
    <property type="entry name" value="GH10_2"/>
    <property type="match status" value="1"/>
</dbReference>
<feature type="chain" id="PRO_0000445197" description="Endo-1,4-beta-xylanase 3">
    <location>
        <begin position="1"/>
        <end position="752"/>
    </location>
</feature>
<feature type="domain" description="CBM-cenC 1" evidence="2">
    <location>
        <begin position="26"/>
        <end position="163"/>
    </location>
</feature>
<feature type="domain" description="CBM-cenC 2" evidence="2">
    <location>
        <begin position="197"/>
        <end position="344"/>
    </location>
</feature>
<feature type="domain" description="GH10" evidence="3">
    <location>
        <begin position="397"/>
        <end position="692"/>
    </location>
</feature>
<feature type="region of interest" description="Disordered" evidence="4">
    <location>
        <begin position="1"/>
        <end position="22"/>
    </location>
</feature>
<feature type="compositionally biased region" description="Basic and acidic residues" evidence="4">
    <location>
        <begin position="10"/>
        <end position="22"/>
    </location>
</feature>
<feature type="active site" description="Proton donor" evidence="3">
    <location>
        <position position="526"/>
    </location>
</feature>
<feature type="active site" description="Nucleophile" evidence="3">
    <location>
        <position position="627"/>
    </location>
</feature>
<feature type="sequence conflict" description="In Ref. 3; BAC42019 and 4; AAO64897." evidence="8" ref="3 4">
    <original>D</original>
    <variation>N</variation>
    <location>
        <position position="54"/>
    </location>
</feature>
<feature type="sequence conflict" description="In Ref. 3; BAC42019 and 4; AAO64897." evidence="8" ref="3 4">
    <original>I</original>
    <variation>V</variation>
    <location>
        <position position="416"/>
    </location>
</feature>
<feature type="sequence conflict" description="In Ref. 3; BAC42019 and 4; AAO64897." evidence="8" ref="3 4">
    <original>A</original>
    <variation>V</variation>
    <location>
        <position position="727"/>
    </location>
</feature>
<reference key="1">
    <citation type="journal article" date="1999" name="Nature">
        <title>Sequence and analysis of chromosome 4 of the plant Arabidopsis thaliana.</title>
        <authorList>
            <person name="Mayer K.F.X."/>
            <person name="Schueller C."/>
            <person name="Wambutt R."/>
            <person name="Murphy G."/>
            <person name="Volckaert G."/>
            <person name="Pohl T."/>
            <person name="Duesterhoeft A."/>
            <person name="Stiekema W."/>
            <person name="Entian K.-D."/>
            <person name="Terryn N."/>
            <person name="Harris B."/>
            <person name="Ansorge W."/>
            <person name="Brandt P."/>
            <person name="Grivell L.A."/>
            <person name="Rieger M."/>
            <person name="Weichselgartner M."/>
            <person name="de Simone V."/>
            <person name="Obermaier B."/>
            <person name="Mache R."/>
            <person name="Mueller M."/>
            <person name="Kreis M."/>
            <person name="Delseny M."/>
            <person name="Puigdomenech P."/>
            <person name="Watson M."/>
            <person name="Schmidtheini T."/>
            <person name="Reichert B."/>
            <person name="Portetelle D."/>
            <person name="Perez-Alonso M."/>
            <person name="Boutry M."/>
            <person name="Bancroft I."/>
            <person name="Vos P."/>
            <person name="Hoheisel J."/>
            <person name="Zimmermann W."/>
            <person name="Wedler H."/>
            <person name="Ridley P."/>
            <person name="Langham S.-A."/>
            <person name="McCullagh B."/>
            <person name="Bilham L."/>
            <person name="Robben J."/>
            <person name="van der Schueren J."/>
            <person name="Grymonprez B."/>
            <person name="Chuang Y.-J."/>
            <person name="Vandenbussche F."/>
            <person name="Braeken M."/>
            <person name="Weltjens I."/>
            <person name="Voet M."/>
            <person name="Bastiaens I."/>
            <person name="Aert R."/>
            <person name="Defoor E."/>
            <person name="Weitzenegger T."/>
            <person name="Bothe G."/>
            <person name="Ramsperger U."/>
            <person name="Hilbert H."/>
            <person name="Braun M."/>
            <person name="Holzer E."/>
            <person name="Brandt A."/>
            <person name="Peters S."/>
            <person name="van Staveren M."/>
            <person name="Dirkse W."/>
            <person name="Mooijman P."/>
            <person name="Klein Lankhorst R."/>
            <person name="Rose M."/>
            <person name="Hauf J."/>
            <person name="Koetter P."/>
            <person name="Berneiser S."/>
            <person name="Hempel S."/>
            <person name="Feldpausch M."/>
            <person name="Lamberth S."/>
            <person name="Van den Daele H."/>
            <person name="De Keyser A."/>
            <person name="Buysshaert C."/>
            <person name="Gielen J."/>
            <person name="Villarroel R."/>
            <person name="De Clercq R."/>
            <person name="van Montagu M."/>
            <person name="Rogers J."/>
            <person name="Cronin A."/>
            <person name="Quail M.A."/>
            <person name="Bray-Allen S."/>
            <person name="Clark L."/>
            <person name="Doggett J."/>
            <person name="Hall S."/>
            <person name="Kay M."/>
            <person name="Lennard N."/>
            <person name="McLay K."/>
            <person name="Mayes R."/>
            <person name="Pettett A."/>
            <person name="Rajandream M.A."/>
            <person name="Lyne M."/>
            <person name="Benes V."/>
            <person name="Rechmann S."/>
            <person name="Borkova D."/>
            <person name="Bloecker H."/>
            <person name="Scharfe M."/>
            <person name="Grimm M."/>
            <person name="Loehnert T.-H."/>
            <person name="Dose S."/>
            <person name="de Haan M."/>
            <person name="Maarse A.C."/>
            <person name="Schaefer M."/>
            <person name="Mueller-Auer S."/>
            <person name="Gabel C."/>
            <person name="Fuchs M."/>
            <person name="Fartmann B."/>
            <person name="Granderath K."/>
            <person name="Dauner D."/>
            <person name="Herzl A."/>
            <person name="Neumann S."/>
            <person name="Argiriou A."/>
            <person name="Vitale D."/>
            <person name="Liguori R."/>
            <person name="Piravandi E."/>
            <person name="Massenet O."/>
            <person name="Quigley F."/>
            <person name="Clabauld G."/>
            <person name="Muendlein A."/>
            <person name="Felber R."/>
            <person name="Schnabl S."/>
            <person name="Hiller R."/>
            <person name="Schmidt W."/>
            <person name="Lecharny A."/>
            <person name="Aubourg S."/>
            <person name="Chefdor F."/>
            <person name="Cooke R."/>
            <person name="Berger C."/>
            <person name="Monfort A."/>
            <person name="Casacuberta E."/>
            <person name="Gibbons T."/>
            <person name="Weber N."/>
            <person name="Vandenbol M."/>
            <person name="Bargues M."/>
            <person name="Terol J."/>
            <person name="Torres A."/>
            <person name="Perez-Perez A."/>
            <person name="Purnelle B."/>
            <person name="Bent E."/>
            <person name="Johnson S."/>
            <person name="Tacon D."/>
            <person name="Jesse T."/>
            <person name="Heijnen L."/>
            <person name="Schwarz S."/>
            <person name="Scholler P."/>
            <person name="Heber S."/>
            <person name="Francs P."/>
            <person name="Bielke C."/>
            <person name="Frishman D."/>
            <person name="Haase D."/>
            <person name="Lemcke K."/>
            <person name="Mewes H.-W."/>
            <person name="Stocker S."/>
            <person name="Zaccaria P."/>
            <person name="Bevan M."/>
            <person name="Wilson R.K."/>
            <person name="de la Bastide M."/>
            <person name="Habermann K."/>
            <person name="Parnell L."/>
            <person name="Dedhia N."/>
            <person name="Gnoj L."/>
            <person name="Schutz K."/>
            <person name="Huang E."/>
            <person name="Spiegel L."/>
            <person name="Sekhon M."/>
            <person name="Murray J."/>
            <person name="Sheet P."/>
            <person name="Cordes M."/>
            <person name="Abu-Threideh J."/>
            <person name="Stoneking T."/>
            <person name="Kalicki J."/>
            <person name="Graves T."/>
            <person name="Harmon G."/>
            <person name="Edwards J."/>
            <person name="Latreille P."/>
            <person name="Courtney L."/>
            <person name="Cloud J."/>
            <person name="Abbott A."/>
            <person name="Scott K."/>
            <person name="Johnson D."/>
            <person name="Minx P."/>
            <person name="Bentley D."/>
            <person name="Fulton B."/>
            <person name="Miller N."/>
            <person name="Greco T."/>
            <person name="Kemp K."/>
            <person name="Kramer J."/>
            <person name="Fulton L."/>
            <person name="Mardis E."/>
            <person name="Dante M."/>
            <person name="Pepin K."/>
            <person name="Hillier L.W."/>
            <person name="Nelson J."/>
            <person name="Spieth J."/>
            <person name="Ryan E."/>
            <person name="Andrews S."/>
            <person name="Geisel C."/>
            <person name="Layman D."/>
            <person name="Du H."/>
            <person name="Ali J."/>
            <person name="Berghoff A."/>
            <person name="Jones K."/>
            <person name="Drone K."/>
            <person name="Cotton M."/>
            <person name="Joshu C."/>
            <person name="Antonoiu B."/>
            <person name="Zidanic M."/>
            <person name="Strong C."/>
            <person name="Sun H."/>
            <person name="Lamar B."/>
            <person name="Yordan C."/>
            <person name="Ma P."/>
            <person name="Zhong J."/>
            <person name="Preston R."/>
            <person name="Vil D."/>
            <person name="Shekher M."/>
            <person name="Matero A."/>
            <person name="Shah R."/>
            <person name="Swaby I.K."/>
            <person name="O'Shaughnessy A."/>
            <person name="Rodriguez M."/>
            <person name="Hoffman J."/>
            <person name="Till S."/>
            <person name="Granat S."/>
            <person name="Shohdy N."/>
            <person name="Hasegawa A."/>
            <person name="Hameed A."/>
            <person name="Lodhi M."/>
            <person name="Johnson A."/>
            <person name="Chen E."/>
            <person name="Marra M.A."/>
            <person name="Martienssen R."/>
            <person name="McCombie W.R."/>
        </authorList>
    </citation>
    <scope>NUCLEOTIDE SEQUENCE [LARGE SCALE GENOMIC DNA]</scope>
    <source>
        <strain>cv. Columbia</strain>
    </source>
</reference>
<reference key="2">
    <citation type="journal article" date="2017" name="Plant J.">
        <title>Araport11: a complete reannotation of the Arabidopsis thaliana reference genome.</title>
        <authorList>
            <person name="Cheng C.Y."/>
            <person name="Krishnakumar V."/>
            <person name="Chan A.P."/>
            <person name="Thibaud-Nissen F."/>
            <person name="Schobel S."/>
            <person name="Town C.D."/>
        </authorList>
    </citation>
    <scope>GENOME REANNOTATION</scope>
    <source>
        <strain>cv. Columbia</strain>
    </source>
</reference>
<reference key="3">
    <citation type="journal article" date="2002" name="Science">
        <title>Functional annotation of a full-length Arabidopsis cDNA collection.</title>
        <authorList>
            <person name="Seki M."/>
            <person name="Narusaka M."/>
            <person name="Kamiya A."/>
            <person name="Ishida J."/>
            <person name="Satou M."/>
            <person name="Sakurai T."/>
            <person name="Nakajima M."/>
            <person name="Enju A."/>
            <person name="Akiyama K."/>
            <person name="Oono Y."/>
            <person name="Muramatsu M."/>
            <person name="Hayashizaki Y."/>
            <person name="Kawai J."/>
            <person name="Carninci P."/>
            <person name="Itoh M."/>
            <person name="Ishii Y."/>
            <person name="Arakawa T."/>
            <person name="Shibata K."/>
            <person name="Shinagawa A."/>
            <person name="Shinozaki K."/>
        </authorList>
    </citation>
    <scope>NUCLEOTIDE SEQUENCE [LARGE SCALE MRNA]</scope>
    <source>
        <strain>cv. Columbia</strain>
    </source>
</reference>
<reference key="4">
    <citation type="journal article" date="2003" name="Science">
        <title>Empirical analysis of transcriptional activity in the Arabidopsis genome.</title>
        <authorList>
            <person name="Yamada K."/>
            <person name="Lim J."/>
            <person name="Dale J.M."/>
            <person name="Chen H."/>
            <person name="Shinn P."/>
            <person name="Palm C.J."/>
            <person name="Southwick A.M."/>
            <person name="Wu H.C."/>
            <person name="Kim C.J."/>
            <person name="Nguyen M."/>
            <person name="Pham P.K."/>
            <person name="Cheuk R.F."/>
            <person name="Karlin-Newmann G."/>
            <person name="Liu S.X."/>
            <person name="Lam B."/>
            <person name="Sakano H."/>
            <person name="Wu T."/>
            <person name="Yu G."/>
            <person name="Miranda M."/>
            <person name="Quach H.L."/>
            <person name="Tripp M."/>
            <person name="Chang C.H."/>
            <person name="Lee J.M."/>
            <person name="Toriumi M.J."/>
            <person name="Chan M.M."/>
            <person name="Tang C.C."/>
            <person name="Onodera C.S."/>
            <person name="Deng J.M."/>
            <person name="Akiyama K."/>
            <person name="Ansari Y."/>
            <person name="Arakawa T."/>
            <person name="Banh J."/>
            <person name="Banno F."/>
            <person name="Bowser L."/>
            <person name="Brooks S.Y."/>
            <person name="Carninci P."/>
            <person name="Chao Q."/>
            <person name="Choy N."/>
            <person name="Enju A."/>
            <person name="Goldsmith A.D."/>
            <person name="Gurjal M."/>
            <person name="Hansen N.F."/>
            <person name="Hayashizaki Y."/>
            <person name="Johnson-Hopson C."/>
            <person name="Hsuan V.W."/>
            <person name="Iida K."/>
            <person name="Karnes M."/>
            <person name="Khan S."/>
            <person name="Koesema E."/>
            <person name="Ishida J."/>
            <person name="Jiang P.X."/>
            <person name="Jones T."/>
            <person name="Kawai J."/>
            <person name="Kamiya A."/>
            <person name="Meyers C."/>
            <person name="Nakajima M."/>
            <person name="Narusaka M."/>
            <person name="Seki M."/>
            <person name="Sakurai T."/>
            <person name="Satou M."/>
            <person name="Tamse R."/>
            <person name="Vaysberg M."/>
            <person name="Wallender E.K."/>
            <person name="Wong C."/>
            <person name="Yamamura Y."/>
            <person name="Yuan S."/>
            <person name="Shinozaki K."/>
            <person name="Davis R.W."/>
            <person name="Theologis A."/>
            <person name="Ecker J.R."/>
        </authorList>
    </citation>
    <scope>NUCLEOTIDE SEQUENCE [LARGE SCALE MRNA]</scope>
    <source>
        <strain>cv. Columbia</strain>
    </source>
</reference>
<reference key="5">
    <citation type="journal article" date="2002" name="Plant Cell Physiol.">
        <title>A xylanase, AtXyn1, is predominantly expressed in vascular bundles, and four putative xylanase genes were identified in the Arabidopsis thaliana genome.</title>
        <authorList>
            <person name="Suzuki M."/>
            <person name="Kato A."/>
            <person name="Nagata N."/>
            <person name="Komeda Y."/>
        </authorList>
    </citation>
    <scope>NUCLEOTIDE SEQUENCE [MRNA] OF 1-232</scope>
    <scope>GENE FAMILY</scope>
    <source>
        <strain>cv. Columbia</strain>
    </source>
</reference>
<reference key="6">
    <citation type="journal article" date="2005" name="Genes Dev.">
        <title>Transcription switches for protoxylem and metaxylem vessel formation.</title>
        <authorList>
            <person name="Kubo M."/>
            <person name="Udagawa M."/>
            <person name="Nishikubo N."/>
            <person name="Horiguchi G."/>
            <person name="Yamaguchi M."/>
            <person name="Ito J."/>
            <person name="Mimura T."/>
            <person name="Fukuda H."/>
            <person name="Demura T."/>
        </authorList>
    </citation>
    <scope>TISSUE SPECIFICITY</scope>
</reference>
<reference key="7">
    <citation type="journal article" date="2005" name="Plant Physiol.">
        <title>The ATE genes are responsible for repression of transdifferentiation into xylem cells in Arabidopsis.</title>
        <authorList>
            <person name="Sawa S."/>
            <person name="Demura T."/>
            <person name="Horiguchi G."/>
            <person name="Kubo M."/>
            <person name="Fukuda H."/>
        </authorList>
    </citation>
    <scope>TISSUE SPECIFICITY</scope>
    <scope>DEVELOPMENTAL STAGE</scope>
    <source>
        <strain>cv. Columbia</strain>
    </source>
</reference>
<organism>
    <name type="scientific">Arabidopsis thaliana</name>
    <name type="common">Mouse-ear cress</name>
    <dbReference type="NCBI Taxonomy" id="3702"/>
    <lineage>
        <taxon>Eukaryota</taxon>
        <taxon>Viridiplantae</taxon>
        <taxon>Streptophyta</taxon>
        <taxon>Embryophyta</taxon>
        <taxon>Tracheophyta</taxon>
        <taxon>Spermatophyta</taxon>
        <taxon>Magnoliopsida</taxon>
        <taxon>eudicotyledons</taxon>
        <taxon>Gunneridae</taxon>
        <taxon>Pentapetalae</taxon>
        <taxon>rosids</taxon>
        <taxon>malvids</taxon>
        <taxon>Brassicales</taxon>
        <taxon>Brassicaceae</taxon>
        <taxon>Camelineae</taxon>
        <taxon>Arabidopsis</taxon>
    </lineage>
</organism>
<protein>
    <recommendedName>
        <fullName evidence="7">Endo-1,4-beta-xylanase 3</fullName>
        <shortName evidence="7">AtXyn3</shortName>
        <shortName evidence="7">Xylan endohydrolase 3</shortName>
        <shortName evidence="7">Xylanase 3</shortName>
        <ecNumber evidence="3">3.2.1.8</ecNumber>
    </recommendedName>
</protein>
<comment type="function">
    <text evidence="1">Binds to and hydrolyzes insoluble and soluble xylan substrates.</text>
</comment>
<comment type="catalytic activity">
    <reaction evidence="3">
        <text>Endohydrolysis of (1-&gt;4)-beta-D-xylosidic linkages in xylans.</text>
        <dbReference type="EC" id="3.2.1.8"/>
    </reaction>
</comment>
<comment type="pathway">
    <text evidence="3">Glycan degradation; xylan degradation.</text>
</comment>
<comment type="tissue specificity">
    <text evidence="5 6">Confined to immature xylems.</text>
</comment>
<comment type="developmental stage">
    <text evidence="5">Observed in maturing tracheary elements (TE) in the root maturation zone.</text>
</comment>
<comment type="domain">
    <text evidence="1">The GH10 domain binds to xylan.</text>
</comment>
<comment type="similarity">
    <text evidence="3">Belongs to the glycosyl hydrolase 10 (cellulase F) family.</text>
</comment>
<comment type="sequence caution" evidence="8">
    <conflict type="erroneous gene model prediction">
        <sequence resource="EMBL-CDS" id="AAD27896"/>
    </conflict>
</comment>
<comment type="sequence caution" evidence="8">
    <conflict type="erroneous gene model prediction">
        <sequence resource="EMBL-CDS" id="CAB81152"/>
    </conflict>
</comment>
<evidence type="ECO:0000250" key="1">
    <source>
        <dbReference type="UniProtKB" id="A3DH97"/>
    </source>
</evidence>
<evidence type="ECO:0000255" key="2"/>
<evidence type="ECO:0000255" key="3">
    <source>
        <dbReference type="PROSITE-ProRule" id="PRU01096"/>
    </source>
</evidence>
<evidence type="ECO:0000256" key="4">
    <source>
        <dbReference type="SAM" id="MobiDB-lite"/>
    </source>
</evidence>
<evidence type="ECO:0000269" key="5">
    <source>
    </source>
</evidence>
<evidence type="ECO:0000269" key="6">
    <source>
    </source>
</evidence>
<evidence type="ECO:0000303" key="7">
    <source>
    </source>
</evidence>
<evidence type="ECO:0000305" key="8"/>
<evidence type="ECO:0000312" key="9">
    <source>
        <dbReference type="Araport" id="AT4G08160"/>
    </source>
</evidence>
<evidence type="ECO:0000312" key="10">
    <source>
        <dbReference type="EMBL" id="AAD27896.1"/>
    </source>
</evidence>